<dbReference type="EC" id="2.7.2.3" evidence="1"/>
<dbReference type="EMBL" id="U83197">
    <property type="protein sequence ID" value="AAB41227.1"/>
    <property type="status" value="ALT_INIT"/>
    <property type="molecule type" value="Genomic_DNA"/>
</dbReference>
<dbReference type="EMBL" id="AM884176">
    <property type="protein sequence ID" value="CAP03506.1"/>
    <property type="molecule type" value="Genomic_DNA"/>
</dbReference>
<dbReference type="RefSeq" id="WP_009873302.1">
    <property type="nucleotide sequence ID" value="NC_010287.1"/>
</dbReference>
<dbReference type="RefSeq" id="YP_001654153.1">
    <property type="nucleotide sequence ID" value="NC_010287.1"/>
</dbReference>
<dbReference type="SMR" id="B0B8R9"/>
<dbReference type="KEGG" id="ctb:CTL0062"/>
<dbReference type="PATRIC" id="fig|471472.4.peg.67"/>
<dbReference type="HOGENOM" id="CLU_025427_0_2_0"/>
<dbReference type="UniPathway" id="UPA00109">
    <property type="reaction ID" value="UER00185"/>
</dbReference>
<dbReference type="Proteomes" id="UP001154402">
    <property type="component" value="Chromosome"/>
</dbReference>
<dbReference type="GO" id="GO:0005829">
    <property type="term" value="C:cytosol"/>
    <property type="evidence" value="ECO:0007669"/>
    <property type="project" value="TreeGrafter"/>
</dbReference>
<dbReference type="GO" id="GO:0043531">
    <property type="term" value="F:ADP binding"/>
    <property type="evidence" value="ECO:0007669"/>
    <property type="project" value="TreeGrafter"/>
</dbReference>
<dbReference type="GO" id="GO:0005524">
    <property type="term" value="F:ATP binding"/>
    <property type="evidence" value="ECO:0007669"/>
    <property type="project" value="UniProtKB-KW"/>
</dbReference>
<dbReference type="GO" id="GO:0004618">
    <property type="term" value="F:phosphoglycerate kinase activity"/>
    <property type="evidence" value="ECO:0007669"/>
    <property type="project" value="UniProtKB-UniRule"/>
</dbReference>
<dbReference type="GO" id="GO:0006094">
    <property type="term" value="P:gluconeogenesis"/>
    <property type="evidence" value="ECO:0007669"/>
    <property type="project" value="TreeGrafter"/>
</dbReference>
<dbReference type="GO" id="GO:0006096">
    <property type="term" value="P:glycolytic process"/>
    <property type="evidence" value="ECO:0007669"/>
    <property type="project" value="UniProtKB-UniRule"/>
</dbReference>
<dbReference type="CDD" id="cd00318">
    <property type="entry name" value="Phosphoglycerate_kinase"/>
    <property type="match status" value="1"/>
</dbReference>
<dbReference type="FunFam" id="3.40.50.1260:FF:000007">
    <property type="entry name" value="Phosphoglycerate kinase"/>
    <property type="match status" value="1"/>
</dbReference>
<dbReference type="FunFam" id="3.40.50.1260:FF:000011">
    <property type="entry name" value="Phosphoglycerate kinase"/>
    <property type="match status" value="1"/>
</dbReference>
<dbReference type="Gene3D" id="3.40.50.1260">
    <property type="entry name" value="Phosphoglycerate kinase, N-terminal domain"/>
    <property type="match status" value="2"/>
</dbReference>
<dbReference type="HAMAP" id="MF_00145">
    <property type="entry name" value="Phosphoglyc_kinase"/>
    <property type="match status" value="1"/>
</dbReference>
<dbReference type="InterPro" id="IPR001576">
    <property type="entry name" value="Phosphoglycerate_kinase"/>
</dbReference>
<dbReference type="InterPro" id="IPR015911">
    <property type="entry name" value="Phosphoglycerate_kinase_CS"/>
</dbReference>
<dbReference type="InterPro" id="IPR015824">
    <property type="entry name" value="Phosphoglycerate_kinase_N"/>
</dbReference>
<dbReference type="InterPro" id="IPR036043">
    <property type="entry name" value="Phosphoglycerate_kinase_sf"/>
</dbReference>
<dbReference type="PANTHER" id="PTHR11406">
    <property type="entry name" value="PHOSPHOGLYCERATE KINASE"/>
    <property type="match status" value="1"/>
</dbReference>
<dbReference type="PANTHER" id="PTHR11406:SF23">
    <property type="entry name" value="PHOSPHOGLYCERATE KINASE 1, CHLOROPLASTIC-RELATED"/>
    <property type="match status" value="1"/>
</dbReference>
<dbReference type="Pfam" id="PF00162">
    <property type="entry name" value="PGK"/>
    <property type="match status" value="1"/>
</dbReference>
<dbReference type="PIRSF" id="PIRSF000724">
    <property type="entry name" value="Pgk"/>
    <property type="match status" value="1"/>
</dbReference>
<dbReference type="PRINTS" id="PR00477">
    <property type="entry name" value="PHGLYCKINASE"/>
</dbReference>
<dbReference type="SUPFAM" id="SSF53748">
    <property type="entry name" value="Phosphoglycerate kinase"/>
    <property type="match status" value="1"/>
</dbReference>
<dbReference type="PROSITE" id="PS00111">
    <property type="entry name" value="PGLYCERATE_KINASE"/>
    <property type="match status" value="1"/>
</dbReference>
<name>PGK_CHLT2</name>
<reference key="1">
    <citation type="journal article" date="1999" name="Mol. Microbiol.">
        <title>Glucose metabolism in Chlamydia trachomatis: the 'energy parasite' hypothesis revisited.</title>
        <authorList>
            <person name="Iliffe-Lee E.R."/>
            <person name="McClarty G."/>
        </authorList>
    </citation>
    <scope>NUCLEOTIDE SEQUENCE [GENOMIC DNA]</scope>
</reference>
<reference key="2">
    <citation type="journal article" date="2008" name="Genome Res.">
        <title>Chlamydia trachomatis: genome sequence analysis of lymphogranuloma venereum isolates.</title>
        <authorList>
            <person name="Thomson N.R."/>
            <person name="Holden M.T.G."/>
            <person name="Carder C."/>
            <person name="Lennard N."/>
            <person name="Lockey S.J."/>
            <person name="Marsh P."/>
            <person name="Skipp P."/>
            <person name="O'Connor C.D."/>
            <person name="Goodhead I."/>
            <person name="Norbertzcak H."/>
            <person name="Harris B."/>
            <person name="Ormond D."/>
            <person name="Rance R."/>
            <person name="Quail M.A."/>
            <person name="Parkhill J."/>
            <person name="Stephens R.S."/>
            <person name="Clarke I.N."/>
        </authorList>
    </citation>
    <scope>NUCLEOTIDE SEQUENCE [LARGE SCALE GENOMIC DNA]</scope>
    <source>
        <strain>ATCC VR-902B / DSM 19102 / 434/Bu</strain>
    </source>
</reference>
<protein>
    <recommendedName>
        <fullName evidence="1">Phosphoglycerate kinase</fullName>
        <ecNumber evidence="1">2.7.2.3</ecNumber>
    </recommendedName>
</protein>
<evidence type="ECO:0000255" key="1">
    <source>
        <dbReference type="HAMAP-Rule" id="MF_00145"/>
    </source>
</evidence>
<evidence type="ECO:0000305" key="2"/>
<accession>B0B8R9</accession>
<accession>O84699</accession>
<accession>P94686</accession>
<feature type="chain" id="PRO_1000096327" description="Phosphoglycerate kinase">
    <location>
        <begin position="1"/>
        <end position="403"/>
    </location>
</feature>
<feature type="binding site" evidence="1">
    <location>
        <begin position="21"/>
        <end position="23"/>
    </location>
    <ligand>
        <name>substrate</name>
    </ligand>
</feature>
<feature type="binding site" evidence="1">
    <location>
        <position position="36"/>
    </location>
    <ligand>
        <name>substrate</name>
    </ligand>
</feature>
<feature type="binding site" evidence="1">
    <location>
        <begin position="59"/>
        <end position="62"/>
    </location>
    <ligand>
        <name>substrate</name>
    </ligand>
</feature>
<feature type="binding site" evidence="1">
    <location>
        <position position="119"/>
    </location>
    <ligand>
        <name>substrate</name>
    </ligand>
</feature>
<feature type="binding site" evidence="1">
    <location>
        <position position="154"/>
    </location>
    <ligand>
        <name>substrate</name>
    </ligand>
</feature>
<feature type="binding site" evidence="1">
    <location>
        <position position="207"/>
    </location>
    <ligand>
        <name>ATP</name>
        <dbReference type="ChEBI" id="CHEBI:30616"/>
    </ligand>
</feature>
<feature type="binding site" evidence="1">
    <location>
        <position position="299"/>
    </location>
    <ligand>
        <name>ATP</name>
        <dbReference type="ChEBI" id="CHEBI:30616"/>
    </ligand>
</feature>
<feature type="binding site" evidence="1">
    <location>
        <position position="330"/>
    </location>
    <ligand>
        <name>ATP</name>
        <dbReference type="ChEBI" id="CHEBI:30616"/>
    </ligand>
</feature>
<feature type="binding site" evidence="1">
    <location>
        <begin position="357"/>
        <end position="360"/>
    </location>
    <ligand>
        <name>ATP</name>
        <dbReference type="ChEBI" id="CHEBI:30616"/>
    </ligand>
</feature>
<comment type="catalytic activity">
    <reaction evidence="1">
        <text>(2R)-3-phosphoglycerate + ATP = (2R)-3-phospho-glyceroyl phosphate + ADP</text>
        <dbReference type="Rhea" id="RHEA:14801"/>
        <dbReference type="ChEBI" id="CHEBI:30616"/>
        <dbReference type="ChEBI" id="CHEBI:57604"/>
        <dbReference type="ChEBI" id="CHEBI:58272"/>
        <dbReference type="ChEBI" id="CHEBI:456216"/>
        <dbReference type="EC" id="2.7.2.3"/>
    </reaction>
</comment>
<comment type="pathway">
    <text evidence="1">Carbohydrate degradation; glycolysis; pyruvate from D-glyceraldehyde 3-phosphate: step 2/5.</text>
</comment>
<comment type="subunit">
    <text evidence="1">Monomer.</text>
</comment>
<comment type="subcellular location">
    <subcellularLocation>
        <location evidence="1">Cytoplasm</location>
    </subcellularLocation>
</comment>
<comment type="similarity">
    <text evidence="1">Belongs to the phosphoglycerate kinase family.</text>
</comment>
<comment type="sequence caution" evidence="2">
    <conflict type="erroneous initiation">
        <sequence resource="EMBL-CDS" id="AAB41227"/>
    </conflict>
</comment>
<organism>
    <name type="scientific">Chlamydia trachomatis serovar L2 (strain ATCC VR-902B / DSM 19102 / 434/Bu)</name>
    <dbReference type="NCBI Taxonomy" id="471472"/>
    <lineage>
        <taxon>Bacteria</taxon>
        <taxon>Pseudomonadati</taxon>
        <taxon>Chlamydiota</taxon>
        <taxon>Chlamydiia</taxon>
        <taxon>Chlamydiales</taxon>
        <taxon>Chlamydiaceae</taxon>
        <taxon>Chlamydia/Chlamydophila group</taxon>
        <taxon>Chlamydia</taxon>
    </lineage>
</organism>
<keyword id="KW-0067">ATP-binding</keyword>
<keyword id="KW-0963">Cytoplasm</keyword>
<keyword id="KW-0324">Glycolysis</keyword>
<keyword id="KW-0418">Kinase</keyword>
<keyword id="KW-0547">Nucleotide-binding</keyword>
<keyword id="KW-0808">Transferase</keyword>
<proteinExistence type="inferred from homology"/>
<gene>
    <name evidence="1" type="primary">pgk</name>
    <name type="ordered locus">CTL0062</name>
</gene>
<sequence>MDKLSIRDLSLEGKKVLVRVDFNVPIKDGKILDDVRIRSAMPTIHYLLKQDAAVILVSHLGRPKGGVFEEAYSLAPIVPVLEGYLGHHVPLSPDCIGEVARQAVAQLSPGRVLLLENVRFHKGEEHPDEDPSFAIELAAYADFYVNDAFGTSHRKHASVYRVPQLFPDRAAAGFLMEKELEFLGQHLLVEPKRPFTAILGGAKMSSKIGVIEALLSCVDHLVLAGGMGYTFLRAMNRQVGNSLVEESGIPLAKKVLEKAQALGVKIHLPVDAKVAKQCDSGEDWRELSIQEGIPEGLAGFDIGAQTIELFSKVIQESATIFWNGPVGVYEVPPFDQGSKAIAQCLASHSSAVTVVGGGDAAAVVALAGCTSQISHVSTGGGASLEFLEKGSLPGTEILSPAQS</sequence>